<name>DHX40_PONAB</name>
<feature type="chain" id="PRO_0000252397" description="Probable ATP-dependent RNA helicase DHX40">
    <location>
        <begin position="1"/>
        <end position="779"/>
    </location>
</feature>
<feature type="domain" description="Helicase ATP-binding" evidence="2">
    <location>
        <begin position="63"/>
        <end position="231"/>
    </location>
</feature>
<feature type="domain" description="Helicase C-terminal" evidence="3">
    <location>
        <begin position="263"/>
        <end position="442"/>
    </location>
</feature>
<feature type="region of interest" description="Disordered" evidence="4">
    <location>
        <begin position="1"/>
        <end position="53"/>
    </location>
</feature>
<feature type="region of interest" description="Disordered" evidence="4">
    <location>
        <begin position="737"/>
        <end position="779"/>
    </location>
</feature>
<feature type="short sequence motif" description="DEAH box">
    <location>
        <begin position="173"/>
        <end position="176"/>
    </location>
</feature>
<feature type="compositionally biased region" description="Basic and acidic residues" evidence="4">
    <location>
        <begin position="13"/>
        <end position="41"/>
    </location>
</feature>
<feature type="compositionally biased region" description="Polar residues" evidence="4">
    <location>
        <begin position="42"/>
        <end position="53"/>
    </location>
</feature>
<feature type="binding site" evidence="2">
    <location>
        <begin position="76"/>
        <end position="83"/>
    </location>
    <ligand>
        <name>ATP</name>
        <dbReference type="ChEBI" id="CHEBI:30616"/>
    </ligand>
</feature>
<organism>
    <name type="scientific">Pongo abelii</name>
    <name type="common">Sumatran orangutan</name>
    <name type="synonym">Pongo pygmaeus abelii</name>
    <dbReference type="NCBI Taxonomy" id="9601"/>
    <lineage>
        <taxon>Eukaryota</taxon>
        <taxon>Metazoa</taxon>
        <taxon>Chordata</taxon>
        <taxon>Craniata</taxon>
        <taxon>Vertebrata</taxon>
        <taxon>Euteleostomi</taxon>
        <taxon>Mammalia</taxon>
        <taxon>Eutheria</taxon>
        <taxon>Euarchontoglires</taxon>
        <taxon>Primates</taxon>
        <taxon>Haplorrhini</taxon>
        <taxon>Catarrhini</taxon>
        <taxon>Hominidae</taxon>
        <taxon>Pongo</taxon>
    </lineage>
</organism>
<gene>
    <name type="primary">DHX40</name>
</gene>
<sequence>MSRFPAVAGRAPRRQEEGERSRDLQEERPSAVCIADREEKGCTSQEGGTTPTFPIQKQRKKIIQAVRDNSFLIVTGNTGSGKTTQLPKYLYEAGFSQHGMIGVTQPRKVAAISVAQRVAEEMKCTLGSKVGYQVRFDDCSSKETAIKYMTDGCLLKHILGDPNLTKFSVIILDEAHERTLTTDILFGLLKKLFQEKSPNRKEHLKVVVMSATMELAKLSAFFGNCPIFDIPGRLYPVREKFCNLIGPRDRENTAYIQAIVKVTMDIHLNEMAGDILVFLTGQFEIEKSCELLFQMAESVDYDYDVQDTTLDGLLILPCYGSMTTDQQRRIFLPPPPGIRKCVISTNISATSLTIDGIRYVVDGGFVKQLNHNPRLGLDILEVVPISKSEALQRSGRAGRTASGKCFRIYSKDFWNQCMPDHVIPEIKRTSLTSVVLTLKCLAIHDVIRFPYLDPPNERLILEALKQLYQCDAIDRSGHVTRLGLSMVEFPLPPHLTCAVIKAASLDCEDLLLPIAAMLSVENVFIRPVDPEYQKEAEQRHRELAAKAGGFNDFATLAVIFEQCKSSGAPASWCQKHWIHWRCLFSAFRVEAQLRELIRKLKQQSDFPRETFEGPKHEVLRRCLCAGYFKNVARRSVGRTFCTMDGRGSPVHIHPSSALHEQETKLEWIVFHEVLVTTKVYARIVCPIRYEWVRDLLPKLHEFNAHDLSSVARREVREDARRRWTNKENVKQLKDGISKDVLKKMQRRNDDKSISDARARFLERKQQRTQDHSDTRKETG</sequence>
<accession>Q5R864</accession>
<keyword id="KW-0067">ATP-binding</keyword>
<keyword id="KW-0347">Helicase</keyword>
<keyword id="KW-0378">Hydrolase</keyword>
<keyword id="KW-0547">Nucleotide-binding</keyword>
<keyword id="KW-1185">Reference proteome</keyword>
<dbReference type="EC" id="3.6.4.13"/>
<dbReference type="EMBL" id="CR859890">
    <property type="protein sequence ID" value="CAH92046.1"/>
    <property type="molecule type" value="mRNA"/>
</dbReference>
<dbReference type="RefSeq" id="NP_001126189.1">
    <property type="nucleotide sequence ID" value="NM_001132717.1"/>
</dbReference>
<dbReference type="SMR" id="Q5R864"/>
<dbReference type="FunCoup" id="Q5R864">
    <property type="interactions" value="746"/>
</dbReference>
<dbReference type="STRING" id="9601.ENSPPYP00000009892"/>
<dbReference type="GeneID" id="100173154"/>
<dbReference type="KEGG" id="pon:100173154"/>
<dbReference type="CTD" id="79665"/>
<dbReference type="eggNOG" id="KOG0922">
    <property type="taxonomic scope" value="Eukaryota"/>
</dbReference>
<dbReference type="InParanoid" id="Q5R864"/>
<dbReference type="OrthoDB" id="10253254at2759"/>
<dbReference type="Proteomes" id="UP000001595">
    <property type="component" value="Unplaced"/>
</dbReference>
<dbReference type="GO" id="GO:0034458">
    <property type="term" value="F:3'-5' RNA helicase activity"/>
    <property type="evidence" value="ECO:0007669"/>
    <property type="project" value="TreeGrafter"/>
</dbReference>
<dbReference type="GO" id="GO:0005524">
    <property type="term" value="F:ATP binding"/>
    <property type="evidence" value="ECO:0007669"/>
    <property type="project" value="UniProtKB-KW"/>
</dbReference>
<dbReference type="GO" id="GO:0016887">
    <property type="term" value="F:ATP hydrolysis activity"/>
    <property type="evidence" value="ECO:0007669"/>
    <property type="project" value="RHEA"/>
</dbReference>
<dbReference type="GO" id="GO:0003723">
    <property type="term" value="F:RNA binding"/>
    <property type="evidence" value="ECO:0007669"/>
    <property type="project" value="TreeGrafter"/>
</dbReference>
<dbReference type="CDD" id="cd17984">
    <property type="entry name" value="DEXHc_DHX40"/>
    <property type="match status" value="1"/>
</dbReference>
<dbReference type="CDD" id="cd18791">
    <property type="entry name" value="SF2_C_RHA"/>
    <property type="match status" value="1"/>
</dbReference>
<dbReference type="FunFam" id="1.10.10.2130:FF:000001">
    <property type="entry name" value="Pre-mRNA-splicing factor ATP-dependent RNA helicase"/>
    <property type="match status" value="1"/>
</dbReference>
<dbReference type="FunFam" id="1.20.120.1080:FF:000009">
    <property type="entry name" value="Probable ATP-dependent RNA helicase DHX40"/>
    <property type="match status" value="1"/>
</dbReference>
<dbReference type="FunFam" id="3.40.50.300:FF:000145">
    <property type="entry name" value="probable ATP-dependent RNA helicase DHX40"/>
    <property type="match status" value="1"/>
</dbReference>
<dbReference type="FunFam" id="3.40.50.300:FF:001082">
    <property type="entry name" value="probable ATP-dependent RNA helicase DHX40"/>
    <property type="match status" value="1"/>
</dbReference>
<dbReference type="Gene3D" id="1.20.120.1080">
    <property type="match status" value="1"/>
</dbReference>
<dbReference type="Gene3D" id="3.40.50.300">
    <property type="entry name" value="P-loop containing nucleotide triphosphate hydrolases"/>
    <property type="match status" value="2"/>
</dbReference>
<dbReference type="InterPro" id="IPR011709">
    <property type="entry name" value="DEAD-box_helicase_OB_fold"/>
</dbReference>
<dbReference type="InterPro" id="IPR011545">
    <property type="entry name" value="DEAD/DEAH_box_helicase_dom"/>
</dbReference>
<dbReference type="InterPro" id="IPR002464">
    <property type="entry name" value="DNA/RNA_helicase_DEAH_CS"/>
</dbReference>
<dbReference type="InterPro" id="IPR048333">
    <property type="entry name" value="HA2_WH"/>
</dbReference>
<dbReference type="InterPro" id="IPR007502">
    <property type="entry name" value="Helicase-assoc_dom"/>
</dbReference>
<dbReference type="InterPro" id="IPR014001">
    <property type="entry name" value="Helicase_ATP-bd"/>
</dbReference>
<dbReference type="InterPro" id="IPR001650">
    <property type="entry name" value="Helicase_C-like"/>
</dbReference>
<dbReference type="InterPro" id="IPR027417">
    <property type="entry name" value="P-loop_NTPase"/>
</dbReference>
<dbReference type="PANTHER" id="PTHR18934">
    <property type="entry name" value="ATP-DEPENDENT RNA HELICASE"/>
    <property type="match status" value="1"/>
</dbReference>
<dbReference type="PANTHER" id="PTHR18934:SF271">
    <property type="entry name" value="ATP-DEPENDENT RNA HELICASE DHX40-RELATED"/>
    <property type="match status" value="1"/>
</dbReference>
<dbReference type="Pfam" id="PF00270">
    <property type="entry name" value="DEAD"/>
    <property type="match status" value="1"/>
</dbReference>
<dbReference type="Pfam" id="PF21010">
    <property type="entry name" value="HA2_C"/>
    <property type="match status" value="1"/>
</dbReference>
<dbReference type="Pfam" id="PF04408">
    <property type="entry name" value="HA2_N"/>
    <property type="match status" value="1"/>
</dbReference>
<dbReference type="Pfam" id="PF00271">
    <property type="entry name" value="Helicase_C"/>
    <property type="match status" value="1"/>
</dbReference>
<dbReference type="Pfam" id="PF07717">
    <property type="entry name" value="OB_NTP_bind"/>
    <property type="match status" value="1"/>
</dbReference>
<dbReference type="SMART" id="SM00487">
    <property type="entry name" value="DEXDc"/>
    <property type="match status" value="1"/>
</dbReference>
<dbReference type="SMART" id="SM00847">
    <property type="entry name" value="HA2"/>
    <property type="match status" value="1"/>
</dbReference>
<dbReference type="SMART" id="SM00490">
    <property type="entry name" value="HELICc"/>
    <property type="match status" value="1"/>
</dbReference>
<dbReference type="SUPFAM" id="SSF52540">
    <property type="entry name" value="P-loop containing nucleoside triphosphate hydrolases"/>
    <property type="match status" value="1"/>
</dbReference>
<dbReference type="PROSITE" id="PS00690">
    <property type="entry name" value="DEAH_ATP_HELICASE"/>
    <property type="match status" value="1"/>
</dbReference>
<dbReference type="PROSITE" id="PS51192">
    <property type="entry name" value="HELICASE_ATP_BIND_1"/>
    <property type="match status" value="1"/>
</dbReference>
<dbReference type="PROSITE" id="PS51194">
    <property type="entry name" value="HELICASE_CTER"/>
    <property type="match status" value="1"/>
</dbReference>
<proteinExistence type="evidence at transcript level"/>
<reference key="1">
    <citation type="submission" date="2004-11" db="EMBL/GenBank/DDBJ databases">
        <authorList>
            <consortium name="The German cDNA consortium"/>
        </authorList>
    </citation>
    <scope>NUCLEOTIDE SEQUENCE [LARGE SCALE MRNA]</scope>
    <source>
        <tissue>Kidney</tissue>
    </source>
</reference>
<comment type="function">
    <text evidence="1">Probable ATP-dependent RNA helicase.</text>
</comment>
<comment type="catalytic activity">
    <reaction>
        <text>ATP + H2O = ADP + phosphate + H(+)</text>
        <dbReference type="Rhea" id="RHEA:13065"/>
        <dbReference type="ChEBI" id="CHEBI:15377"/>
        <dbReference type="ChEBI" id="CHEBI:15378"/>
        <dbReference type="ChEBI" id="CHEBI:30616"/>
        <dbReference type="ChEBI" id="CHEBI:43474"/>
        <dbReference type="ChEBI" id="CHEBI:456216"/>
        <dbReference type="EC" id="3.6.4.13"/>
    </reaction>
</comment>
<comment type="similarity">
    <text evidence="5">Belongs to the DEAD box helicase family. DEAH subfamily.</text>
</comment>
<protein>
    <recommendedName>
        <fullName>Probable ATP-dependent RNA helicase DHX40</fullName>
        <ecNumber>3.6.4.13</ecNumber>
    </recommendedName>
    <alternativeName>
        <fullName>DEAH box protein 40</fullName>
    </alternativeName>
</protein>
<evidence type="ECO:0000250" key="1"/>
<evidence type="ECO:0000255" key="2">
    <source>
        <dbReference type="PROSITE-ProRule" id="PRU00541"/>
    </source>
</evidence>
<evidence type="ECO:0000255" key="3">
    <source>
        <dbReference type="PROSITE-ProRule" id="PRU00542"/>
    </source>
</evidence>
<evidence type="ECO:0000256" key="4">
    <source>
        <dbReference type="SAM" id="MobiDB-lite"/>
    </source>
</evidence>
<evidence type="ECO:0000305" key="5"/>